<accession>Q2IUR8</accession>
<protein>
    <recommendedName>
        <fullName evidence="1">tRNA dimethylallyltransferase</fullName>
        <ecNumber evidence="1">2.5.1.75</ecNumber>
    </recommendedName>
    <alternativeName>
        <fullName evidence="1">Dimethylallyl diphosphate:tRNA dimethylallyltransferase</fullName>
        <shortName evidence="1">DMAPP:tRNA dimethylallyltransferase</shortName>
        <shortName evidence="1">DMATase</shortName>
    </alternativeName>
    <alternativeName>
        <fullName evidence="1">Isopentenyl-diphosphate:tRNA isopentenyltransferase</fullName>
        <shortName evidence="1">IPP transferase</shortName>
        <shortName evidence="1">IPPT</shortName>
        <shortName evidence="1">IPTase</shortName>
    </alternativeName>
</protein>
<dbReference type="EC" id="2.5.1.75" evidence="1"/>
<dbReference type="EMBL" id="CP000250">
    <property type="protein sequence ID" value="ABD08042.1"/>
    <property type="molecule type" value="Genomic_DNA"/>
</dbReference>
<dbReference type="SMR" id="Q2IUR8"/>
<dbReference type="STRING" id="316058.RPB_3346"/>
<dbReference type="KEGG" id="rpb:RPB_3346"/>
<dbReference type="eggNOG" id="COG0324">
    <property type="taxonomic scope" value="Bacteria"/>
</dbReference>
<dbReference type="HOGENOM" id="CLU_032616_0_1_5"/>
<dbReference type="Proteomes" id="UP000008809">
    <property type="component" value="Chromosome"/>
</dbReference>
<dbReference type="GO" id="GO:0005524">
    <property type="term" value="F:ATP binding"/>
    <property type="evidence" value="ECO:0007669"/>
    <property type="project" value="UniProtKB-UniRule"/>
</dbReference>
<dbReference type="GO" id="GO:0052381">
    <property type="term" value="F:tRNA dimethylallyltransferase activity"/>
    <property type="evidence" value="ECO:0007669"/>
    <property type="project" value="UniProtKB-UniRule"/>
</dbReference>
<dbReference type="GO" id="GO:0006400">
    <property type="term" value="P:tRNA modification"/>
    <property type="evidence" value="ECO:0007669"/>
    <property type="project" value="TreeGrafter"/>
</dbReference>
<dbReference type="Gene3D" id="1.10.20.140">
    <property type="match status" value="1"/>
</dbReference>
<dbReference type="Gene3D" id="3.40.50.300">
    <property type="entry name" value="P-loop containing nucleotide triphosphate hydrolases"/>
    <property type="match status" value="1"/>
</dbReference>
<dbReference type="HAMAP" id="MF_00185">
    <property type="entry name" value="IPP_trans"/>
    <property type="match status" value="1"/>
</dbReference>
<dbReference type="InterPro" id="IPR039657">
    <property type="entry name" value="Dimethylallyltransferase"/>
</dbReference>
<dbReference type="InterPro" id="IPR018022">
    <property type="entry name" value="IPT"/>
</dbReference>
<dbReference type="InterPro" id="IPR027417">
    <property type="entry name" value="P-loop_NTPase"/>
</dbReference>
<dbReference type="NCBIfam" id="TIGR00174">
    <property type="entry name" value="miaA"/>
    <property type="match status" value="1"/>
</dbReference>
<dbReference type="PANTHER" id="PTHR11088">
    <property type="entry name" value="TRNA DIMETHYLALLYLTRANSFERASE"/>
    <property type="match status" value="1"/>
</dbReference>
<dbReference type="PANTHER" id="PTHR11088:SF60">
    <property type="entry name" value="TRNA DIMETHYLALLYLTRANSFERASE"/>
    <property type="match status" value="1"/>
</dbReference>
<dbReference type="Pfam" id="PF01715">
    <property type="entry name" value="IPPT"/>
    <property type="match status" value="1"/>
</dbReference>
<dbReference type="SUPFAM" id="SSF52540">
    <property type="entry name" value="P-loop containing nucleoside triphosphate hydrolases"/>
    <property type="match status" value="2"/>
</dbReference>
<gene>
    <name evidence="1" type="primary">miaA</name>
    <name type="ordered locus">RPB_3346</name>
</gene>
<organism>
    <name type="scientific">Rhodopseudomonas palustris (strain HaA2)</name>
    <dbReference type="NCBI Taxonomy" id="316058"/>
    <lineage>
        <taxon>Bacteria</taxon>
        <taxon>Pseudomonadati</taxon>
        <taxon>Pseudomonadota</taxon>
        <taxon>Alphaproteobacteria</taxon>
        <taxon>Hyphomicrobiales</taxon>
        <taxon>Nitrobacteraceae</taxon>
        <taxon>Rhodopseudomonas</taxon>
    </lineage>
</organism>
<name>MIAA_RHOP2</name>
<evidence type="ECO:0000255" key="1">
    <source>
        <dbReference type="HAMAP-Rule" id="MF_00185"/>
    </source>
</evidence>
<keyword id="KW-0067">ATP-binding</keyword>
<keyword id="KW-0460">Magnesium</keyword>
<keyword id="KW-0547">Nucleotide-binding</keyword>
<keyword id="KW-1185">Reference proteome</keyword>
<keyword id="KW-0808">Transferase</keyword>
<keyword id="KW-0819">tRNA processing</keyword>
<feature type="chain" id="PRO_0000377291" description="tRNA dimethylallyltransferase">
    <location>
        <begin position="1"/>
        <end position="310"/>
    </location>
</feature>
<feature type="region of interest" description="Interaction with substrate tRNA" evidence="1">
    <location>
        <begin position="30"/>
        <end position="33"/>
    </location>
</feature>
<feature type="binding site" evidence="1">
    <location>
        <begin position="5"/>
        <end position="12"/>
    </location>
    <ligand>
        <name>ATP</name>
        <dbReference type="ChEBI" id="CHEBI:30616"/>
    </ligand>
</feature>
<feature type="binding site" evidence="1">
    <location>
        <begin position="7"/>
        <end position="12"/>
    </location>
    <ligand>
        <name>substrate</name>
    </ligand>
</feature>
<feature type="site" description="Interaction with substrate tRNA" evidence="1">
    <location>
        <position position="96"/>
    </location>
</feature>
<feature type="site" description="Interaction with substrate tRNA" evidence="1">
    <location>
        <position position="118"/>
    </location>
</feature>
<sequence>MLIAGPTASGKSALALRLAQMHGGVVINTDSMQMYRDLRIITARPTPEEEALVPHRLYGTVDAAVNFSAGAFVEAAAGALAEARASGLLPIFIGGTGLYFKALTRGLSLVPPVPAEIRDAVRLRLDRDGVAALHAELARHDPAAAERLAPADRSRIARALEVVLATGRPLADWHGEASPPLLPPDGVTAVFLAPEREALYARIDARFAAMLRAGALDEVAALAERRLDPLLPAMKAHGVPALIRHLRGEISLDEAAVIGAADTRHYAKRQFTWFRHQLPEFRWVTPEEAGRVVDQEFQGNPSCTTSTASS</sequence>
<comment type="function">
    <text evidence="1">Catalyzes the transfer of a dimethylallyl group onto the adenine at position 37 in tRNAs that read codons beginning with uridine, leading to the formation of N6-(dimethylallyl)adenosine (i(6)A).</text>
</comment>
<comment type="catalytic activity">
    <reaction evidence="1">
        <text>adenosine(37) in tRNA + dimethylallyl diphosphate = N(6)-dimethylallyladenosine(37) in tRNA + diphosphate</text>
        <dbReference type="Rhea" id="RHEA:26482"/>
        <dbReference type="Rhea" id="RHEA-COMP:10162"/>
        <dbReference type="Rhea" id="RHEA-COMP:10375"/>
        <dbReference type="ChEBI" id="CHEBI:33019"/>
        <dbReference type="ChEBI" id="CHEBI:57623"/>
        <dbReference type="ChEBI" id="CHEBI:74411"/>
        <dbReference type="ChEBI" id="CHEBI:74415"/>
        <dbReference type="EC" id="2.5.1.75"/>
    </reaction>
</comment>
<comment type="cofactor">
    <cofactor evidence="1">
        <name>Mg(2+)</name>
        <dbReference type="ChEBI" id="CHEBI:18420"/>
    </cofactor>
</comment>
<comment type="subunit">
    <text evidence="1">Monomer.</text>
</comment>
<comment type="similarity">
    <text evidence="1">Belongs to the IPP transferase family.</text>
</comment>
<proteinExistence type="inferred from homology"/>
<reference key="1">
    <citation type="submission" date="2006-01" db="EMBL/GenBank/DDBJ databases">
        <title>Complete sequence of Rhodopseudomonas palustris HaA2.</title>
        <authorList>
            <consortium name="US DOE Joint Genome Institute"/>
            <person name="Copeland A."/>
            <person name="Lucas S."/>
            <person name="Lapidus A."/>
            <person name="Barry K."/>
            <person name="Detter J.C."/>
            <person name="Glavina T."/>
            <person name="Hammon N."/>
            <person name="Israni S."/>
            <person name="Pitluck S."/>
            <person name="Chain P."/>
            <person name="Malfatti S."/>
            <person name="Shin M."/>
            <person name="Vergez L."/>
            <person name="Schmutz J."/>
            <person name="Larimer F."/>
            <person name="Land M."/>
            <person name="Hauser L."/>
            <person name="Pelletier D.A."/>
            <person name="Kyrpides N."/>
            <person name="Anderson I."/>
            <person name="Oda Y."/>
            <person name="Harwood C.S."/>
            <person name="Richardson P."/>
        </authorList>
    </citation>
    <scope>NUCLEOTIDE SEQUENCE [LARGE SCALE GENOMIC DNA]</scope>
    <source>
        <strain>HaA2</strain>
    </source>
</reference>